<gene>
    <name type="primary">dbp8</name>
    <name type="ORF">SS1G_00058</name>
</gene>
<feature type="chain" id="PRO_0000310236" description="ATP-dependent RNA helicase dbp8">
    <location>
        <begin position="1"/>
        <end position="540"/>
    </location>
</feature>
<feature type="domain" description="Helicase ATP-binding" evidence="2">
    <location>
        <begin position="142"/>
        <end position="322"/>
    </location>
</feature>
<feature type="domain" description="Helicase C-terminal" evidence="3">
    <location>
        <begin position="354"/>
        <end position="505"/>
    </location>
</feature>
<feature type="region of interest" description="Disordered" evidence="4">
    <location>
        <begin position="1"/>
        <end position="65"/>
    </location>
</feature>
<feature type="short sequence motif" description="Q motif">
    <location>
        <begin position="111"/>
        <end position="139"/>
    </location>
</feature>
<feature type="short sequence motif" description="DEAD box">
    <location>
        <begin position="264"/>
        <end position="267"/>
    </location>
</feature>
<feature type="compositionally biased region" description="Polar residues" evidence="4">
    <location>
        <begin position="1"/>
        <end position="15"/>
    </location>
</feature>
<feature type="compositionally biased region" description="Low complexity" evidence="4">
    <location>
        <begin position="23"/>
        <end position="32"/>
    </location>
</feature>
<feature type="compositionally biased region" description="Low complexity" evidence="4">
    <location>
        <begin position="43"/>
        <end position="55"/>
    </location>
</feature>
<feature type="binding site" evidence="2">
    <location>
        <begin position="155"/>
        <end position="162"/>
    </location>
    <ligand>
        <name>ATP</name>
        <dbReference type="ChEBI" id="CHEBI:30616"/>
    </ligand>
</feature>
<dbReference type="EC" id="3.6.4.13"/>
<dbReference type="EMBL" id="CH476621">
    <property type="protein sequence ID" value="EDN90658.1"/>
    <property type="molecule type" value="Genomic_DNA"/>
</dbReference>
<dbReference type="RefSeq" id="XP_001597972.1">
    <property type="nucleotide sequence ID" value="XM_001597922.1"/>
</dbReference>
<dbReference type="SMR" id="A7E436"/>
<dbReference type="FunCoup" id="A7E436">
    <property type="interactions" value="785"/>
</dbReference>
<dbReference type="STRING" id="665079.A7E436"/>
<dbReference type="EnsemblFungi" id="EDN90658">
    <property type="protein sequence ID" value="EDN90658"/>
    <property type="gene ID" value="SS1G_00058"/>
</dbReference>
<dbReference type="GeneID" id="5494819"/>
<dbReference type="KEGG" id="ssl:SS1G_00058"/>
<dbReference type="VEuPathDB" id="FungiDB:sscle_03g029990"/>
<dbReference type="eggNOG" id="KOG0340">
    <property type="taxonomic scope" value="Eukaryota"/>
</dbReference>
<dbReference type="HOGENOM" id="CLU_003041_1_1_1"/>
<dbReference type="InParanoid" id="A7E436"/>
<dbReference type="OMA" id="IMIFTDT"/>
<dbReference type="OrthoDB" id="10261904at2759"/>
<dbReference type="Proteomes" id="UP000001312">
    <property type="component" value="Unassembled WGS sequence"/>
</dbReference>
<dbReference type="GO" id="GO:0005730">
    <property type="term" value="C:nucleolus"/>
    <property type="evidence" value="ECO:0007669"/>
    <property type="project" value="UniProtKB-SubCell"/>
</dbReference>
<dbReference type="GO" id="GO:0005634">
    <property type="term" value="C:nucleus"/>
    <property type="evidence" value="ECO:0000318"/>
    <property type="project" value="GO_Central"/>
</dbReference>
<dbReference type="GO" id="GO:0005524">
    <property type="term" value="F:ATP binding"/>
    <property type="evidence" value="ECO:0007669"/>
    <property type="project" value="UniProtKB-KW"/>
</dbReference>
<dbReference type="GO" id="GO:0016887">
    <property type="term" value="F:ATP hydrolysis activity"/>
    <property type="evidence" value="ECO:0007669"/>
    <property type="project" value="RHEA"/>
</dbReference>
<dbReference type="GO" id="GO:0003723">
    <property type="term" value="F:RNA binding"/>
    <property type="evidence" value="ECO:0007669"/>
    <property type="project" value="UniProtKB-KW"/>
</dbReference>
<dbReference type="GO" id="GO:0003724">
    <property type="term" value="F:RNA helicase activity"/>
    <property type="evidence" value="ECO:0007669"/>
    <property type="project" value="UniProtKB-EC"/>
</dbReference>
<dbReference type="GO" id="GO:0006364">
    <property type="term" value="P:rRNA processing"/>
    <property type="evidence" value="ECO:0000318"/>
    <property type="project" value="GO_Central"/>
</dbReference>
<dbReference type="CDD" id="cd17955">
    <property type="entry name" value="DEADc_DDX49"/>
    <property type="match status" value="1"/>
</dbReference>
<dbReference type="CDD" id="cd18787">
    <property type="entry name" value="SF2_C_DEAD"/>
    <property type="match status" value="1"/>
</dbReference>
<dbReference type="Gene3D" id="3.40.50.300">
    <property type="entry name" value="P-loop containing nucleotide triphosphate hydrolases"/>
    <property type="match status" value="2"/>
</dbReference>
<dbReference type="InterPro" id="IPR011545">
    <property type="entry name" value="DEAD/DEAH_box_helicase_dom"/>
</dbReference>
<dbReference type="InterPro" id="IPR050079">
    <property type="entry name" value="DEAD_box_RNA_helicase"/>
</dbReference>
<dbReference type="InterPro" id="IPR014001">
    <property type="entry name" value="Helicase_ATP-bd"/>
</dbReference>
<dbReference type="InterPro" id="IPR001650">
    <property type="entry name" value="Helicase_C-like"/>
</dbReference>
<dbReference type="InterPro" id="IPR027417">
    <property type="entry name" value="P-loop_NTPase"/>
</dbReference>
<dbReference type="InterPro" id="IPR000629">
    <property type="entry name" value="RNA-helicase_DEAD-box_CS"/>
</dbReference>
<dbReference type="InterPro" id="IPR014014">
    <property type="entry name" value="RNA_helicase_DEAD_Q_motif"/>
</dbReference>
<dbReference type="PANTHER" id="PTHR47959:SF24">
    <property type="entry name" value="ATP-DEPENDENT RNA HELICASE"/>
    <property type="match status" value="1"/>
</dbReference>
<dbReference type="PANTHER" id="PTHR47959">
    <property type="entry name" value="ATP-DEPENDENT RNA HELICASE RHLE-RELATED"/>
    <property type="match status" value="1"/>
</dbReference>
<dbReference type="Pfam" id="PF00270">
    <property type="entry name" value="DEAD"/>
    <property type="match status" value="1"/>
</dbReference>
<dbReference type="Pfam" id="PF00271">
    <property type="entry name" value="Helicase_C"/>
    <property type="match status" value="1"/>
</dbReference>
<dbReference type="SMART" id="SM00487">
    <property type="entry name" value="DEXDc"/>
    <property type="match status" value="1"/>
</dbReference>
<dbReference type="SMART" id="SM00490">
    <property type="entry name" value="HELICc"/>
    <property type="match status" value="1"/>
</dbReference>
<dbReference type="SUPFAM" id="SSF52540">
    <property type="entry name" value="P-loop containing nucleoside triphosphate hydrolases"/>
    <property type="match status" value="1"/>
</dbReference>
<dbReference type="PROSITE" id="PS00039">
    <property type="entry name" value="DEAD_ATP_HELICASE"/>
    <property type="match status" value="1"/>
</dbReference>
<dbReference type="PROSITE" id="PS51192">
    <property type="entry name" value="HELICASE_ATP_BIND_1"/>
    <property type="match status" value="1"/>
</dbReference>
<dbReference type="PROSITE" id="PS51194">
    <property type="entry name" value="HELICASE_CTER"/>
    <property type="match status" value="1"/>
</dbReference>
<dbReference type="PROSITE" id="PS51195">
    <property type="entry name" value="Q_MOTIF"/>
    <property type="match status" value="1"/>
</dbReference>
<name>DBP8_SCLS1</name>
<comment type="function">
    <text evidence="1">ATP-binding RNA helicase involved in 40S ribosomal subunit biogenesis and is required for the normal formation of 18S rRNAs through pre-rRNA processing at A0, A1 and A2 sites. Required for vegetative growth (By similarity).</text>
</comment>
<comment type="catalytic activity">
    <reaction>
        <text>ATP + H2O = ADP + phosphate + H(+)</text>
        <dbReference type="Rhea" id="RHEA:13065"/>
        <dbReference type="ChEBI" id="CHEBI:15377"/>
        <dbReference type="ChEBI" id="CHEBI:15378"/>
        <dbReference type="ChEBI" id="CHEBI:30616"/>
        <dbReference type="ChEBI" id="CHEBI:43474"/>
        <dbReference type="ChEBI" id="CHEBI:456216"/>
        <dbReference type="EC" id="3.6.4.13"/>
    </reaction>
</comment>
<comment type="subcellular location">
    <subcellularLocation>
        <location evidence="1">Nucleus</location>
        <location evidence="1">Nucleolus</location>
    </subcellularLocation>
</comment>
<comment type="domain">
    <text>The Q motif is unique to and characteristic of the DEAD box family of RNA helicases and controls ATP binding and hydrolysis.</text>
</comment>
<comment type="similarity">
    <text evidence="5">Belongs to the DEAD box helicase family. DDX49/DBP8 subfamily.</text>
</comment>
<evidence type="ECO:0000250" key="1"/>
<evidence type="ECO:0000255" key="2">
    <source>
        <dbReference type="PROSITE-ProRule" id="PRU00541"/>
    </source>
</evidence>
<evidence type="ECO:0000255" key="3">
    <source>
        <dbReference type="PROSITE-ProRule" id="PRU00542"/>
    </source>
</evidence>
<evidence type="ECO:0000256" key="4">
    <source>
        <dbReference type="SAM" id="MobiDB-lite"/>
    </source>
</evidence>
<evidence type="ECO:0000305" key="5"/>
<keyword id="KW-0067">ATP-binding</keyword>
<keyword id="KW-0347">Helicase</keyword>
<keyword id="KW-0378">Hydrolase</keyword>
<keyword id="KW-0547">Nucleotide-binding</keyword>
<keyword id="KW-0539">Nucleus</keyword>
<keyword id="KW-1185">Reference proteome</keyword>
<keyword id="KW-0690">Ribosome biogenesis</keyword>
<keyword id="KW-0694">RNA-binding</keyword>
<keyword id="KW-0698">rRNA processing</keyword>
<protein>
    <recommendedName>
        <fullName>ATP-dependent RNA helicase dbp8</fullName>
        <ecNumber>3.6.4.13</ecNumber>
    </recommendedName>
</protein>
<organism>
    <name type="scientific">Sclerotinia sclerotiorum (strain ATCC 18683 / 1980 / Ss-1)</name>
    <name type="common">White mold</name>
    <name type="synonym">Whetzelinia sclerotiorum</name>
    <dbReference type="NCBI Taxonomy" id="665079"/>
    <lineage>
        <taxon>Eukaryota</taxon>
        <taxon>Fungi</taxon>
        <taxon>Dikarya</taxon>
        <taxon>Ascomycota</taxon>
        <taxon>Pezizomycotina</taxon>
        <taxon>Leotiomycetes</taxon>
        <taxon>Helotiales</taxon>
        <taxon>Sclerotiniaceae</taxon>
        <taxon>Sclerotinia</taxon>
    </lineage>
</organism>
<reference key="1">
    <citation type="journal article" date="2011" name="PLoS Genet.">
        <title>Genomic analysis of the necrotrophic fungal pathogens Sclerotinia sclerotiorum and Botrytis cinerea.</title>
        <authorList>
            <person name="Amselem J."/>
            <person name="Cuomo C.A."/>
            <person name="van Kan J.A.L."/>
            <person name="Viaud M."/>
            <person name="Benito E.P."/>
            <person name="Couloux A."/>
            <person name="Coutinho P.M."/>
            <person name="de Vries R.P."/>
            <person name="Dyer P.S."/>
            <person name="Fillinger S."/>
            <person name="Fournier E."/>
            <person name="Gout L."/>
            <person name="Hahn M."/>
            <person name="Kohn L."/>
            <person name="Lapalu N."/>
            <person name="Plummer K.M."/>
            <person name="Pradier J.-M."/>
            <person name="Quevillon E."/>
            <person name="Sharon A."/>
            <person name="Simon A."/>
            <person name="ten Have A."/>
            <person name="Tudzynski B."/>
            <person name="Tudzynski P."/>
            <person name="Wincker P."/>
            <person name="Andrew M."/>
            <person name="Anthouard V."/>
            <person name="Beever R.E."/>
            <person name="Beffa R."/>
            <person name="Benoit I."/>
            <person name="Bouzid O."/>
            <person name="Brault B."/>
            <person name="Chen Z."/>
            <person name="Choquer M."/>
            <person name="Collemare J."/>
            <person name="Cotton P."/>
            <person name="Danchin E.G."/>
            <person name="Da Silva C."/>
            <person name="Gautier A."/>
            <person name="Giraud C."/>
            <person name="Giraud T."/>
            <person name="Gonzalez C."/>
            <person name="Grossetete S."/>
            <person name="Gueldener U."/>
            <person name="Henrissat B."/>
            <person name="Howlett B.J."/>
            <person name="Kodira C."/>
            <person name="Kretschmer M."/>
            <person name="Lappartient A."/>
            <person name="Leroch M."/>
            <person name="Levis C."/>
            <person name="Mauceli E."/>
            <person name="Neuveglise C."/>
            <person name="Oeser B."/>
            <person name="Pearson M."/>
            <person name="Poulain J."/>
            <person name="Poussereau N."/>
            <person name="Quesneville H."/>
            <person name="Rascle C."/>
            <person name="Schumacher J."/>
            <person name="Segurens B."/>
            <person name="Sexton A."/>
            <person name="Silva E."/>
            <person name="Sirven C."/>
            <person name="Soanes D.M."/>
            <person name="Talbot N.J."/>
            <person name="Templeton M."/>
            <person name="Yandava C."/>
            <person name="Yarden O."/>
            <person name="Zeng Q."/>
            <person name="Rollins J.A."/>
            <person name="Lebrun M.-H."/>
            <person name="Dickman M."/>
        </authorList>
    </citation>
    <scope>NUCLEOTIDE SEQUENCE [LARGE SCALE GENOMIC DNA]</scope>
    <source>
        <strain>ATCC 18683 / 1980 / Ss-1</strain>
    </source>
</reference>
<accession>A7E436</accession>
<proteinExistence type="inferred from homology"/>
<sequence>MHSKKSIQGSETVEQVSIEAPGSSSPQSNHNSSSDDEQDVQDDISQSDSDSLDSQASRKRRKTSQVLEDGDIPLIATTSVPSRVKAKSQNNLLEPKNFNNGAVLAPTDAQTTFAALDVKPWLVASLGAMAIKRPTGIQKGCIPEILKGRDCIGGSRTGSGKTVAFAVPILQKWAEDPFGIFALVLTPTRELALQIYEQFKAISSPQSLKAVLITGGSDMRPQATALAQRPHVVIATPGRLADHIRTSGEDTVCALRRVRMVVLDEADRLLASGSVGSMLPDVEECLSLLPPPSERQTLLFTATVTPEVRALKDMPRTLGKPPVFVCEVDTQALAIPSSLNQMHLQVPVTHREHYLHMFLLTEKNLPKSIVIFCNRTATADYLTHLLRLLEHRVTALHSKLPQRQRIDNLGRFRASAARILVATDVAARGLDIPEVGLVINYDVPRDPDDYIHRVGRTARAGRKGEAVTFVGQRDVQLILAIEKRVGRQMEAWTEEGVNLETRVIRESLKLVGEKKREAMLEIEEGREVGGKRKRGMKKLS</sequence>